<organism>
    <name type="scientific">Cellvibrio japonicus (strain Ueda107)</name>
    <name type="common">Pseudomonas fluorescens subsp. cellulosa</name>
    <dbReference type="NCBI Taxonomy" id="498211"/>
    <lineage>
        <taxon>Bacteria</taxon>
        <taxon>Pseudomonadati</taxon>
        <taxon>Pseudomonadota</taxon>
        <taxon>Gammaproteobacteria</taxon>
        <taxon>Cellvibrionales</taxon>
        <taxon>Cellvibrionaceae</taxon>
        <taxon>Cellvibrio</taxon>
    </lineage>
</organism>
<proteinExistence type="inferred from homology"/>
<evidence type="ECO:0000255" key="1">
    <source>
        <dbReference type="HAMAP-Rule" id="MF_00294"/>
    </source>
</evidence>
<evidence type="ECO:0000256" key="2">
    <source>
        <dbReference type="SAM" id="MobiDB-lite"/>
    </source>
</evidence>
<evidence type="ECO:0000305" key="3"/>
<feature type="chain" id="PRO_0000356423" description="Large ribosomal subunit protein bL33">
    <location>
        <begin position="1"/>
        <end position="51"/>
    </location>
</feature>
<feature type="region of interest" description="Disordered" evidence="2">
    <location>
        <begin position="1"/>
        <end position="24"/>
    </location>
</feature>
<comment type="similarity">
    <text evidence="1">Belongs to the bacterial ribosomal protein bL33 family.</text>
</comment>
<name>RL33_CELJU</name>
<sequence>MREKIRLNSSAGTGHFYTTDKNKRTMPEKMEIKKYDPVVRKHVVYKEGKIK</sequence>
<dbReference type="EMBL" id="CP000934">
    <property type="protein sequence ID" value="ACE83861.1"/>
    <property type="molecule type" value="Genomic_DNA"/>
</dbReference>
<dbReference type="RefSeq" id="WP_012489089.1">
    <property type="nucleotide sequence ID" value="NC_010995.1"/>
</dbReference>
<dbReference type="SMR" id="B3PG60"/>
<dbReference type="STRING" id="498211.CJA_3514"/>
<dbReference type="KEGG" id="cja:CJA_3514"/>
<dbReference type="eggNOG" id="COG0267">
    <property type="taxonomic scope" value="Bacteria"/>
</dbReference>
<dbReference type="HOGENOM" id="CLU_190949_1_1_6"/>
<dbReference type="OrthoDB" id="21586at2"/>
<dbReference type="Proteomes" id="UP000001036">
    <property type="component" value="Chromosome"/>
</dbReference>
<dbReference type="GO" id="GO:0022625">
    <property type="term" value="C:cytosolic large ribosomal subunit"/>
    <property type="evidence" value="ECO:0007669"/>
    <property type="project" value="TreeGrafter"/>
</dbReference>
<dbReference type="GO" id="GO:0003735">
    <property type="term" value="F:structural constituent of ribosome"/>
    <property type="evidence" value="ECO:0007669"/>
    <property type="project" value="InterPro"/>
</dbReference>
<dbReference type="GO" id="GO:0006412">
    <property type="term" value="P:translation"/>
    <property type="evidence" value="ECO:0007669"/>
    <property type="project" value="UniProtKB-UniRule"/>
</dbReference>
<dbReference type="FunFam" id="2.20.28.120:FF:000001">
    <property type="entry name" value="50S ribosomal protein L33"/>
    <property type="match status" value="1"/>
</dbReference>
<dbReference type="Gene3D" id="2.20.28.120">
    <property type="entry name" value="Ribosomal protein L33"/>
    <property type="match status" value="1"/>
</dbReference>
<dbReference type="HAMAP" id="MF_00294">
    <property type="entry name" value="Ribosomal_bL33"/>
    <property type="match status" value="1"/>
</dbReference>
<dbReference type="InterPro" id="IPR001705">
    <property type="entry name" value="Ribosomal_bL33"/>
</dbReference>
<dbReference type="InterPro" id="IPR018264">
    <property type="entry name" value="Ribosomal_bL33_CS"/>
</dbReference>
<dbReference type="InterPro" id="IPR038584">
    <property type="entry name" value="Ribosomal_bL33_sf"/>
</dbReference>
<dbReference type="InterPro" id="IPR011332">
    <property type="entry name" value="Ribosomal_zn-bd"/>
</dbReference>
<dbReference type="NCBIfam" id="NF001860">
    <property type="entry name" value="PRK00595.1"/>
    <property type="match status" value="1"/>
</dbReference>
<dbReference type="NCBIfam" id="TIGR01023">
    <property type="entry name" value="rpmG_bact"/>
    <property type="match status" value="1"/>
</dbReference>
<dbReference type="PANTHER" id="PTHR15238">
    <property type="entry name" value="54S RIBOSOMAL PROTEIN L39, MITOCHONDRIAL"/>
    <property type="match status" value="1"/>
</dbReference>
<dbReference type="PANTHER" id="PTHR15238:SF1">
    <property type="entry name" value="LARGE RIBOSOMAL SUBUNIT PROTEIN BL33M"/>
    <property type="match status" value="1"/>
</dbReference>
<dbReference type="Pfam" id="PF00471">
    <property type="entry name" value="Ribosomal_L33"/>
    <property type="match status" value="1"/>
</dbReference>
<dbReference type="SUPFAM" id="SSF57829">
    <property type="entry name" value="Zn-binding ribosomal proteins"/>
    <property type="match status" value="1"/>
</dbReference>
<dbReference type="PROSITE" id="PS00582">
    <property type="entry name" value="RIBOSOMAL_L33"/>
    <property type="match status" value="1"/>
</dbReference>
<protein>
    <recommendedName>
        <fullName evidence="1">Large ribosomal subunit protein bL33</fullName>
    </recommendedName>
    <alternativeName>
        <fullName evidence="3">50S ribosomal protein L33</fullName>
    </alternativeName>
</protein>
<gene>
    <name evidence="1" type="primary">rpmG</name>
    <name type="ordered locus">CJA_3514</name>
</gene>
<accession>B3PG60</accession>
<reference key="1">
    <citation type="journal article" date="2008" name="J. Bacteriol.">
        <title>Insights into plant cell wall degradation from the genome sequence of the soil bacterium Cellvibrio japonicus.</title>
        <authorList>
            <person name="DeBoy R.T."/>
            <person name="Mongodin E.F."/>
            <person name="Fouts D.E."/>
            <person name="Tailford L.E."/>
            <person name="Khouri H."/>
            <person name="Emerson J.B."/>
            <person name="Mohamoud Y."/>
            <person name="Watkins K."/>
            <person name="Henrissat B."/>
            <person name="Gilbert H.J."/>
            <person name="Nelson K.E."/>
        </authorList>
    </citation>
    <scope>NUCLEOTIDE SEQUENCE [LARGE SCALE GENOMIC DNA]</scope>
    <source>
        <strain>Ueda107</strain>
    </source>
</reference>
<keyword id="KW-1185">Reference proteome</keyword>
<keyword id="KW-0687">Ribonucleoprotein</keyword>
<keyword id="KW-0689">Ribosomal protein</keyword>